<dbReference type="EMBL" id="DQ866150">
    <property type="protein sequence ID" value="ABI48359.1"/>
    <property type="molecule type" value="mRNA"/>
</dbReference>
<dbReference type="RefSeq" id="NP_001118129.1">
    <property type="nucleotide sequence ID" value="NM_001124657.1"/>
</dbReference>
<dbReference type="SMR" id="Q0GGL7"/>
<dbReference type="GeneID" id="100136689"/>
<dbReference type="KEGG" id="omy:100136689"/>
<dbReference type="CTD" id="3569"/>
<dbReference type="OrthoDB" id="8943569at2759"/>
<dbReference type="Proteomes" id="UP000694395">
    <property type="component" value="Unplaced"/>
</dbReference>
<dbReference type="GO" id="GO:0005615">
    <property type="term" value="C:extracellular space"/>
    <property type="evidence" value="ECO:0007669"/>
    <property type="project" value="UniProtKB-KW"/>
</dbReference>
<dbReference type="GO" id="GO:0005125">
    <property type="term" value="F:cytokine activity"/>
    <property type="evidence" value="ECO:0007669"/>
    <property type="project" value="UniProtKB-KW"/>
</dbReference>
<dbReference type="GO" id="GO:0008083">
    <property type="term" value="F:growth factor activity"/>
    <property type="evidence" value="ECO:0007669"/>
    <property type="project" value="UniProtKB-KW"/>
</dbReference>
<dbReference type="GO" id="GO:0005138">
    <property type="term" value="F:interleukin-6 receptor binding"/>
    <property type="evidence" value="ECO:0007669"/>
    <property type="project" value="InterPro"/>
</dbReference>
<dbReference type="GO" id="GO:0006953">
    <property type="term" value="P:acute-phase response"/>
    <property type="evidence" value="ECO:0007669"/>
    <property type="project" value="UniProtKB-KW"/>
</dbReference>
<dbReference type="GO" id="GO:0030154">
    <property type="term" value="P:cell differentiation"/>
    <property type="evidence" value="ECO:0007669"/>
    <property type="project" value="InterPro"/>
</dbReference>
<dbReference type="GO" id="GO:0007259">
    <property type="term" value="P:cell surface receptor signaling pathway via JAK-STAT"/>
    <property type="evidence" value="ECO:0000314"/>
    <property type="project" value="AgBase"/>
</dbReference>
<dbReference type="GO" id="GO:0071347">
    <property type="term" value="P:cellular response to interleukin-1"/>
    <property type="evidence" value="ECO:0000314"/>
    <property type="project" value="AgBase"/>
</dbReference>
<dbReference type="GO" id="GO:0071222">
    <property type="term" value="P:cellular response to lipopolysaccharide"/>
    <property type="evidence" value="ECO:0000314"/>
    <property type="project" value="AgBase"/>
</dbReference>
<dbReference type="GO" id="GO:0042593">
    <property type="term" value="P:glucose homeostasis"/>
    <property type="evidence" value="ECO:0000250"/>
    <property type="project" value="UniProtKB"/>
</dbReference>
<dbReference type="GO" id="GO:0072574">
    <property type="term" value="P:hepatocyte proliferation"/>
    <property type="evidence" value="ECO:0000250"/>
    <property type="project" value="UniProtKB"/>
</dbReference>
<dbReference type="GO" id="GO:1902615">
    <property type="term" value="P:immune response involved in response to exogenous dsRNA"/>
    <property type="evidence" value="ECO:0000314"/>
    <property type="project" value="AgBase"/>
</dbReference>
<dbReference type="GO" id="GO:0045087">
    <property type="term" value="P:innate immune response"/>
    <property type="evidence" value="ECO:0000315"/>
    <property type="project" value="AgBase"/>
</dbReference>
<dbReference type="GO" id="GO:0070102">
    <property type="term" value="P:interleukin-6-mediated signaling pathway"/>
    <property type="evidence" value="ECO:0000314"/>
    <property type="project" value="AgBase"/>
</dbReference>
<dbReference type="GO" id="GO:0097421">
    <property type="term" value="P:liver regeneration"/>
    <property type="evidence" value="ECO:0000250"/>
    <property type="project" value="UniProtKB"/>
</dbReference>
<dbReference type="GO" id="GO:0061517">
    <property type="term" value="P:macrophage proliferation"/>
    <property type="evidence" value="ECO:0000314"/>
    <property type="project" value="AgBase"/>
</dbReference>
<dbReference type="GO" id="GO:0010629">
    <property type="term" value="P:negative regulation of gene expression"/>
    <property type="evidence" value="ECO:0000314"/>
    <property type="project" value="AgBase"/>
</dbReference>
<dbReference type="GO" id="GO:0010628">
    <property type="term" value="P:positive regulation of gene expression"/>
    <property type="evidence" value="ECO:0000314"/>
    <property type="project" value="AgBase"/>
</dbReference>
<dbReference type="GO" id="GO:1904894">
    <property type="term" value="P:positive regulation of receptor signaling pathway via STAT"/>
    <property type="evidence" value="ECO:0000250"/>
    <property type="project" value="UniProtKB"/>
</dbReference>
<dbReference type="GO" id="GO:0070092">
    <property type="term" value="P:regulation of glucagon secretion"/>
    <property type="evidence" value="ECO:0000250"/>
    <property type="project" value="UniProtKB"/>
</dbReference>
<dbReference type="GO" id="GO:0050796">
    <property type="term" value="P:regulation of insulin secretion"/>
    <property type="evidence" value="ECO:0000250"/>
    <property type="project" value="UniProtKB"/>
</dbReference>
<dbReference type="GO" id="GO:0014823">
    <property type="term" value="P:response to activity"/>
    <property type="evidence" value="ECO:0000250"/>
    <property type="project" value="UniProtKB"/>
</dbReference>
<dbReference type="GO" id="GO:0010573">
    <property type="term" value="P:vascular endothelial growth factor production"/>
    <property type="evidence" value="ECO:0000250"/>
    <property type="project" value="UniProtKB"/>
</dbReference>
<dbReference type="FunFam" id="1.20.1250.10:FF:000069">
    <property type="entry name" value="Interleukin-6"/>
    <property type="match status" value="1"/>
</dbReference>
<dbReference type="Gene3D" id="1.20.1250.10">
    <property type="match status" value="1"/>
</dbReference>
<dbReference type="InterPro" id="IPR009079">
    <property type="entry name" value="4_helix_cytokine-like_core"/>
</dbReference>
<dbReference type="InterPro" id="IPR003574">
    <property type="entry name" value="IL-6-like"/>
</dbReference>
<dbReference type="InterPro" id="IPR030474">
    <property type="entry name" value="IL-6/GCSF/MGF"/>
</dbReference>
<dbReference type="PANTHER" id="PTHR48494">
    <property type="entry name" value="INTERLEUKIN-6"/>
    <property type="match status" value="1"/>
</dbReference>
<dbReference type="PANTHER" id="PTHR48494:SF1">
    <property type="entry name" value="INTERLEUKIN-6"/>
    <property type="match status" value="1"/>
</dbReference>
<dbReference type="Pfam" id="PF00489">
    <property type="entry name" value="IL6"/>
    <property type="match status" value="1"/>
</dbReference>
<dbReference type="PRINTS" id="PR00434">
    <property type="entry name" value="INTERLEUKIN6"/>
</dbReference>
<dbReference type="SMART" id="SM00126">
    <property type="entry name" value="IL6"/>
    <property type="match status" value="1"/>
</dbReference>
<dbReference type="SUPFAM" id="SSF47266">
    <property type="entry name" value="4-helical cytokines"/>
    <property type="match status" value="1"/>
</dbReference>
<name>IL6_ONCMY</name>
<gene>
    <name type="primary">il6</name>
</gene>
<reference key="1">
    <citation type="journal article" date="2007" name="Mol. Immunol.">
        <title>Cloning and expression analysis of an IL-6 homolog in rainbow trout (Oncorhynchus mykiss).</title>
        <authorList>
            <person name="Iliev D.B."/>
            <person name="Castellana B."/>
            <person name="Mackenzie S."/>
            <person name="Planas J.V."/>
            <person name="Goetz F.W."/>
        </authorList>
    </citation>
    <scope>NUCLEOTIDE SEQUENCE [MRNA]</scope>
    <scope>TISSUE SPECIFICITY</scope>
    <scope>INDUCTION</scope>
</reference>
<keyword id="KW-0011">Acute phase</keyword>
<keyword id="KW-0202">Cytokine</keyword>
<keyword id="KW-1015">Disulfide bond</keyword>
<keyword id="KW-0339">Growth factor</keyword>
<keyword id="KW-0964">Secreted</keyword>
<keyword id="KW-0732">Signal</keyword>
<proteinExistence type="evidence at transcript level"/>
<accession>Q0GGL7</accession>
<sequence>MNSSTRYLSLLSALVVLVKGNPVPSALAELMTSGWTSGEELGTDGETGAPPKWEKMIKMLVHEVTTLRNQQFVEEFQKPVEEISSFSQHQVPSTPPHLSKTLCSASNKEACLQEISRGLQVYQLLLQHVKAEYPQSTLLPSVTHQTTVLIGLVKDQMKVAEVVEDLSASERKRVLGEVSTGTEWERKTSVHAILRELRNFLVDTKRALRRMGKRGKDFQ</sequence>
<organism>
    <name type="scientific">Oncorhynchus mykiss</name>
    <name type="common">Rainbow trout</name>
    <name type="synonym">Salmo gairdneri</name>
    <dbReference type="NCBI Taxonomy" id="8022"/>
    <lineage>
        <taxon>Eukaryota</taxon>
        <taxon>Metazoa</taxon>
        <taxon>Chordata</taxon>
        <taxon>Craniata</taxon>
        <taxon>Vertebrata</taxon>
        <taxon>Euteleostomi</taxon>
        <taxon>Actinopterygii</taxon>
        <taxon>Neopterygii</taxon>
        <taxon>Teleostei</taxon>
        <taxon>Protacanthopterygii</taxon>
        <taxon>Salmoniformes</taxon>
        <taxon>Salmonidae</taxon>
        <taxon>Salmoninae</taxon>
        <taxon>Oncorhynchus</taxon>
    </lineage>
</organism>
<protein>
    <recommendedName>
        <fullName>Interleukin-6</fullName>
        <shortName>IL-6</shortName>
    </recommendedName>
</protein>
<comment type="function">
    <text evidence="1">Cytokine with a wide variety of biological functions in immunity, tissue regeneration, and metabolism. Binds to IL6R, then the complex associates to the signaling subunit IL6ST/gp130 to trigger the intracellular IL6-signaling pathway. The interaction with the membrane-bound IL6R and IL6ST stimulates 'classic signaling', whereas the binding of IL6 and soluble IL6R to IL6ST stimulates 'trans-signaling'. Alternatively, 'cluster signaling' occurs when membrane-bound IL6:IL6R complexes on transmitter cells activate IL6ST receptors on neighboring receiver cells.</text>
</comment>
<comment type="subunit">
    <text evidence="1">Component of a hexamer of two molecules each of IL6, IL6R and IL6ST; first binds to IL6R to associate with the signaling subunit IL6ST.</text>
</comment>
<comment type="subcellular location">
    <subcellularLocation>
        <location evidence="1">Secreted</location>
    </subcellularLocation>
</comment>
<comment type="tissue specificity">
    <text evidence="3">Expressed in spleen, gill and gastrointestinal tract, ovary and brain. Highest expression in ovary.</text>
</comment>
<comment type="induction">
    <text evidence="3">by LPS.</text>
</comment>
<comment type="similarity">
    <text evidence="4">Belongs to the IL-6 superfamily.</text>
</comment>
<evidence type="ECO:0000250" key="1">
    <source>
        <dbReference type="UniProtKB" id="P05231"/>
    </source>
</evidence>
<evidence type="ECO:0000255" key="2"/>
<evidence type="ECO:0000269" key="3">
    <source>
    </source>
</evidence>
<evidence type="ECO:0000305" key="4"/>
<feature type="signal peptide" evidence="2">
    <location>
        <begin position="1"/>
        <end position="20"/>
    </location>
</feature>
<feature type="chain" id="PRO_0000387949" description="Interleukin-6">
    <location>
        <begin position="21"/>
        <end position="219"/>
    </location>
</feature>
<feature type="disulfide bond" evidence="2">
    <location>
        <begin position="103"/>
        <end position="111"/>
    </location>
</feature>